<gene>
    <name evidence="1" type="primary">minE</name>
    <name type="ordered locus">Bcep1808_0901</name>
</gene>
<accession>A4JCA9</accession>
<protein>
    <recommendedName>
        <fullName evidence="1">Cell division topological specificity factor</fullName>
    </recommendedName>
</protein>
<name>MINE_BURVG</name>
<keyword id="KW-0131">Cell cycle</keyword>
<keyword id="KW-0132">Cell division</keyword>
<feature type="chain" id="PRO_1000047778" description="Cell division topological specificity factor">
    <location>
        <begin position="1"/>
        <end position="84"/>
    </location>
</feature>
<comment type="function">
    <text evidence="1">Prevents the cell division inhibition by proteins MinC and MinD at internal division sites while permitting inhibition at polar sites. This ensures cell division at the proper site by restricting the formation of a division septum at the midpoint of the long axis of the cell.</text>
</comment>
<comment type="similarity">
    <text evidence="1">Belongs to the MinE family.</text>
</comment>
<reference key="1">
    <citation type="submission" date="2007-03" db="EMBL/GenBank/DDBJ databases">
        <title>Complete sequence of chromosome 1 of Burkholderia vietnamiensis G4.</title>
        <authorList>
            <consortium name="US DOE Joint Genome Institute"/>
            <person name="Copeland A."/>
            <person name="Lucas S."/>
            <person name="Lapidus A."/>
            <person name="Barry K."/>
            <person name="Detter J.C."/>
            <person name="Glavina del Rio T."/>
            <person name="Hammon N."/>
            <person name="Israni S."/>
            <person name="Dalin E."/>
            <person name="Tice H."/>
            <person name="Pitluck S."/>
            <person name="Chain P."/>
            <person name="Malfatti S."/>
            <person name="Shin M."/>
            <person name="Vergez L."/>
            <person name="Schmutz J."/>
            <person name="Larimer F."/>
            <person name="Land M."/>
            <person name="Hauser L."/>
            <person name="Kyrpides N."/>
            <person name="Tiedje J."/>
            <person name="Richardson P."/>
        </authorList>
    </citation>
    <scope>NUCLEOTIDE SEQUENCE [LARGE SCALE GENOMIC DNA]</scope>
    <source>
        <strain>G4 / LMG 22486</strain>
    </source>
</reference>
<organism>
    <name type="scientific">Burkholderia vietnamiensis (strain G4 / LMG 22486)</name>
    <name type="common">Burkholderia cepacia (strain R1808)</name>
    <dbReference type="NCBI Taxonomy" id="269482"/>
    <lineage>
        <taxon>Bacteria</taxon>
        <taxon>Pseudomonadati</taxon>
        <taxon>Pseudomonadota</taxon>
        <taxon>Betaproteobacteria</taxon>
        <taxon>Burkholderiales</taxon>
        <taxon>Burkholderiaceae</taxon>
        <taxon>Burkholderia</taxon>
        <taxon>Burkholderia cepacia complex</taxon>
    </lineage>
</organism>
<sequence>MSILSFLLGEKKKSASVAKERLQLIIAHERVGGRPPADYLPALQKELVAVISKYVQISNDDIRVSLERQDDLEVLEVKIEIPQA</sequence>
<proteinExistence type="inferred from homology"/>
<dbReference type="EMBL" id="CP000614">
    <property type="protein sequence ID" value="ABO53912.1"/>
    <property type="molecule type" value="Genomic_DNA"/>
</dbReference>
<dbReference type="SMR" id="A4JCA9"/>
<dbReference type="KEGG" id="bvi:Bcep1808_0901"/>
<dbReference type="eggNOG" id="COG0851">
    <property type="taxonomic scope" value="Bacteria"/>
</dbReference>
<dbReference type="HOGENOM" id="CLU_137929_2_1_4"/>
<dbReference type="Proteomes" id="UP000002287">
    <property type="component" value="Chromosome 1"/>
</dbReference>
<dbReference type="GO" id="GO:0051301">
    <property type="term" value="P:cell division"/>
    <property type="evidence" value="ECO:0007669"/>
    <property type="project" value="UniProtKB-KW"/>
</dbReference>
<dbReference type="GO" id="GO:0032955">
    <property type="term" value="P:regulation of division septum assembly"/>
    <property type="evidence" value="ECO:0007669"/>
    <property type="project" value="InterPro"/>
</dbReference>
<dbReference type="FunFam" id="3.30.1070.10:FF:000001">
    <property type="entry name" value="Cell division topological specificity factor"/>
    <property type="match status" value="1"/>
</dbReference>
<dbReference type="Gene3D" id="3.30.1070.10">
    <property type="entry name" value="Cell division topological specificity factor MinE"/>
    <property type="match status" value="1"/>
</dbReference>
<dbReference type="HAMAP" id="MF_00262">
    <property type="entry name" value="MinE"/>
    <property type="match status" value="1"/>
</dbReference>
<dbReference type="InterPro" id="IPR005527">
    <property type="entry name" value="MinE"/>
</dbReference>
<dbReference type="InterPro" id="IPR036707">
    <property type="entry name" value="MinE_sf"/>
</dbReference>
<dbReference type="NCBIfam" id="TIGR01215">
    <property type="entry name" value="minE"/>
    <property type="match status" value="1"/>
</dbReference>
<dbReference type="NCBIfam" id="NF001422">
    <property type="entry name" value="PRK00296.1"/>
    <property type="match status" value="1"/>
</dbReference>
<dbReference type="NCBIfam" id="NF010595">
    <property type="entry name" value="PRK13989.1"/>
    <property type="match status" value="1"/>
</dbReference>
<dbReference type="Pfam" id="PF03776">
    <property type="entry name" value="MinE"/>
    <property type="match status" value="1"/>
</dbReference>
<dbReference type="SUPFAM" id="SSF55229">
    <property type="entry name" value="Cell division protein MinE topological specificity domain"/>
    <property type="match status" value="1"/>
</dbReference>
<evidence type="ECO:0000255" key="1">
    <source>
        <dbReference type="HAMAP-Rule" id="MF_00262"/>
    </source>
</evidence>